<name>RL24_BUCAT</name>
<evidence type="ECO:0000255" key="1">
    <source>
        <dbReference type="HAMAP-Rule" id="MF_01326"/>
    </source>
</evidence>
<evidence type="ECO:0000305" key="2"/>
<reference key="1">
    <citation type="journal article" date="2009" name="Science">
        <title>The dynamics and time scale of ongoing genomic erosion in symbiotic bacteria.</title>
        <authorList>
            <person name="Moran N.A."/>
            <person name="McLaughlin H.J."/>
            <person name="Sorek R."/>
        </authorList>
    </citation>
    <scope>NUCLEOTIDE SEQUENCE [LARGE SCALE GENOMIC DNA]</scope>
    <source>
        <strain>Tuc7</strain>
    </source>
</reference>
<comment type="function">
    <text evidence="1">One of two assembly initiator proteins, it binds directly to the 5'-end of the 23S rRNA, where it nucleates assembly of the 50S subunit.</text>
</comment>
<comment type="function">
    <text evidence="1">One of the proteins that surrounds the polypeptide exit tunnel on the outside of the subunit.</text>
</comment>
<comment type="subunit">
    <text evidence="1">Part of the 50S ribosomal subunit.</text>
</comment>
<comment type="similarity">
    <text evidence="1">Belongs to the universal ribosomal protein uL24 family.</text>
</comment>
<accession>B8D838</accession>
<gene>
    <name evidence="1" type="primary">rplX</name>
    <name type="ordered locus">BUAPTUC7_507</name>
</gene>
<keyword id="KW-0687">Ribonucleoprotein</keyword>
<keyword id="KW-0689">Ribosomal protein</keyword>
<keyword id="KW-0694">RNA-binding</keyword>
<keyword id="KW-0699">rRNA-binding</keyword>
<protein>
    <recommendedName>
        <fullName evidence="1">Large ribosomal subunit protein uL24</fullName>
    </recommendedName>
    <alternativeName>
        <fullName evidence="2">50S ribosomal protein L24</fullName>
    </alternativeName>
</protein>
<organism>
    <name type="scientific">Buchnera aphidicola subsp. Acyrthosiphon pisum (strain Tuc7)</name>
    <dbReference type="NCBI Taxonomy" id="561501"/>
    <lineage>
        <taxon>Bacteria</taxon>
        <taxon>Pseudomonadati</taxon>
        <taxon>Pseudomonadota</taxon>
        <taxon>Gammaproteobacteria</taxon>
        <taxon>Enterobacterales</taxon>
        <taxon>Erwiniaceae</taxon>
        <taxon>Buchnera</taxon>
    </lineage>
</organism>
<sequence>MALKLRRNDSVVILTGKDKGKTGIIKNILSLNQVIVKGLNLIKKHQKPVPSQNKSGGIIEKEAPIHISNIAILNPESNKADRIGFRFEEGRKVRFFKSTGKTIQ</sequence>
<proteinExistence type="inferred from homology"/>
<feature type="chain" id="PRO_1000165933" description="Large ribosomal subunit protein uL24">
    <location>
        <begin position="1"/>
        <end position="104"/>
    </location>
</feature>
<dbReference type="EMBL" id="CP001158">
    <property type="protein sequence ID" value="ACL30303.1"/>
    <property type="molecule type" value="Genomic_DNA"/>
</dbReference>
<dbReference type="RefSeq" id="WP_009874464.1">
    <property type="nucleotide sequence ID" value="NC_011834.1"/>
</dbReference>
<dbReference type="SMR" id="B8D838"/>
<dbReference type="KEGG" id="bau:BUAPTUC7_507"/>
<dbReference type="HOGENOM" id="CLU_093315_2_2_6"/>
<dbReference type="GO" id="GO:1990904">
    <property type="term" value="C:ribonucleoprotein complex"/>
    <property type="evidence" value="ECO:0007669"/>
    <property type="project" value="UniProtKB-KW"/>
</dbReference>
<dbReference type="GO" id="GO:0005840">
    <property type="term" value="C:ribosome"/>
    <property type="evidence" value="ECO:0007669"/>
    <property type="project" value="UniProtKB-KW"/>
</dbReference>
<dbReference type="GO" id="GO:0019843">
    <property type="term" value="F:rRNA binding"/>
    <property type="evidence" value="ECO:0007669"/>
    <property type="project" value="UniProtKB-UniRule"/>
</dbReference>
<dbReference type="GO" id="GO:0003735">
    <property type="term" value="F:structural constituent of ribosome"/>
    <property type="evidence" value="ECO:0007669"/>
    <property type="project" value="InterPro"/>
</dbReference>
<dbReference type="GO" id="GO:0006412">
    <property type="term" value="P:translation"/>
    <property type="evidence" value="ECO:0007669"/>
    <property type="project" value="UniProtKB-UniRule"/>
</dbReference>
<dbReference type="CDD" id="cd06089">
    <property type="entry name" value="KOW_RPL26"/>
    <property type="match status" value="1"/>
</dbReference>
<dbReference type="FunFam" id="2.30.30.30:FF:000004">
    <property type="entry name" value="50S ribosomal protein L24"/>
    <property type="match status" value="1"/>
</dbReference>
<dbReference type="Gene3D" id="2.30.30.30">
    <property type="match status" value="1"/>
</dbReference>
<dbReference type="HAMAP" id="MF_01326_B">
    <property type="entry name" value="Ribosomal_uL24_B"/>
    <property type="match status" value="1"/>
</dbReference>
<dbReference type="InterPro" id="IPR005824">
    <property type="entry name" value="KOW"/>
</dbReference>
<dbReference type="InterPro" id="IPR014722">
    <property type="entry name" value="Rib_uL2_dom2"/>
</dbReference>
<dbReference type="InterPro" id="IPR003256">
    <property type="entry name" value="Ribosomal_uL24"/>
</dbReference>
<dbReference type="InterPro" id="IPR005825">
    <property type="entry name" value="Ribosomal_uL24_CS"/>
</dbReference>
<dbReference type="InterPro" id="IPR041988">
    <property type="entry name" value="Ribosomal_uL24_KOW"/>
</dbReference>
<dbReference type="InterPro" id="IPR008991">
    <property type="entry name" value="Translation_prot_SH3-like_sf"/>
</dbReference>
<dbReference type="NCBIfam" id="TIGR01079">
    <property type="entry name" value="rplX_bact"/>
    <property type="match status" value="1"/>
</dbReference>
<dbReference type="PANTHER" id="PTHR12903">
    <property type="entry name" value="MITOCHONDRIAL RIBOSOMAL PROTEIN L24"/>
    <property type="match status" value="1"/>
</dbReference>
<dbReference type="Pfam" id="PF00467">
    <property type="entry name" value="KOW"/>
    <property type="match status" value="1"/>
</dbReference>
<dbReference type="Pfam" id="PF17136">
    <property type="entry name" value="ribosomal_L24"/>
    <property type="match status" value="1"/>
</dbReference>
<dbReference type="SUPFAM" id="SSF50104">
    <property type="entry name" value="Translation proteins SH3-like domain"/>
    <property type="match status" value="1"/>
</dbReference>
<dbReference type="PROSITE" id="PS01108">
    <property type="entry name" value="RIBOSOMAL_L24"/>
    <property type="match status" value="1"/>
</dbReference>